<sequence>MSSSNTPSSSAAAAGSIDSSAARRNSKRPKYSKFTQQELPACKPILTPGWVISTFLIISVIFIPLGVISLFASQDVVEIVDRYDSACIPLSDRANKVAYIQGTGNKSCTRTLIVPKRMKQPIYVYYQLENFYQNHRRYVKSRSDSQLRSVKDENQIDACKPEDDFGGQPIVPCGLIAWSLFNDTYVLSRNNQGLTVNKKGIAWKSDKEHKFGKNVFPKNFQKGNLTGGASLDPNKPLSDQEDLIVWMRTAALPTFRKLYGKIESDLEKGENIQVTLQNNYNTYSFSGKKKLVLSTTSWLGGKNDFLGIAYLTVGGICFVLALAFTVMYLVKPRRLGDPTYLSWNRIPGGR</sequence>
<protein>
    <recommendedName>
        <fullName>ALA-interacting subunit 1</fullName>
        <shortName>AtALIS1</shortName>
    </recommendedName>
    <alternativeName>
        <fullName>ALA3 beta-subunit 1</fullName>
    </alternativeName>
</protein>
<feature type="initiator methionine" description="Removed" evidence="6">
    <location>
        <position position="1"/>
    </location>
</feature>
<feature type="chain" id="PRO_0000366954" description="ALA-interacting subunit 1">
    <location>
        <begin position="2"/>
        <end position="350"/>
    </location>
</feature>
<feature type="transmembrane region" description="Helical" evidence="1">
    <location>
        <begin position="51"/>
        <end position="71"/>
    </location>
</feature>
<feature type="transmembrane region" description="Helical" evidence="1">
    <location>
        <begin position="305"/>
        <end position="325"/>
    </location>
</feature>
<feature type="region of interest" description="Disordered" evidence="2">
    <location>
        <begin position="1"/>
        <end position="32"/>
    </location>
</feature>
<feature type="compositionally biased region" description="Low complexity" evidence="2">
    <location>
        <begin position="1"/>
        <end position="22"/>
    </location>
</feature>
<feature type="modified residue" description="N-acetylserine" evidence="6">
    <location>
        <position position="2"/>
    </location>
</feature>
<feature type="glycosylation site" description="N-linked (GlcNAc...) asparagine" evidence="1">
    <location>
        <position position="105"/>
    </location>
</feature>
<feature type="glycosylation site" description="N-linked (GlcNAc...) asparagine" evidence="1">
    <location>
        <position position="182"/>
    </location>
</feature>
<feature type="glycosylation site" description="N-linked (GlcNAc...) asparagine" evidence="1">
    <location>
        <position position="224"/>
    </location>
</feature>
<comment type="function">
    <text evidence="3 4">Required for the lipid transport activity of the ALA/ALIS P4-ATPase complex.</text>
</comment>
<comment type="subunit">
    <text evidence="3 4">Associates with ALA3 to form a stable complex. Interacts with ALA2 in a heterologous system.</text>
</comment>
<comment type="subcellular location">
    <subcellularLocation>
        <location>Golgi apparatus membrane</location>
        <topology>Multi-pass membrane protein</topology>
    </subcellularLocation>
    <subcellularLocation>
        <location>Prevacuolar compartment membrane</location>
        <topology>Multi-pass membrane protein</topology>
    </subcellularLocation>
    <subcellularLocation>
        <location>Endoplasmic reticulum membrane</location>
        <topology>Multi-pass membrane protein</topology>
    </subcellularLocation>
    <text>In a heterologous system, the final intracellular localization after exit from the endoplasmic reticulum is the prevacuolar compartment in the presence of ALA2 and the Golgi in the presence of ALA3.</text>
</comment>
<comment type="tissue specificity">
    <text evidence="3">Expressed in roots, leaves, stems, flowers and siliques. Found in petals and sepals, but not in reproductive tissues. In siliques, detected in the upper part of the seed pod and in the area between the seed pod and the stem, but not in developing seeds. Strong expression in vascular shoot tissues and in stomatal guard cells of young rosettes leaves. In roots, expressed in cells surrounding the xylem and in central and peripheral columella cells.</text>
</comment>
<comment type="similarity">
    <text evidence="5">Belongs to the CDC50/LEM3 family.</text>
</comment>
<dbReference type="EMBL" id="AB024033">
    <property type="protein sequence ID" value="BAB02418.1"/>
    <property type="molecule type" value="Genomic_DNA"/>
</dbReference>
<dbReference type="EMBL" id="CP002686">
    <property type="protein sequence ID" value="AEE75241.1"/>
    <property type="molecule type" value="Genomic_DNA"/>
</dbReference>
<dbReference type="EMBL" id="AY045904">
    <property type="protein sequence ID" value="AAK76578.1"/>
    <property type="molecule type" value="mRNA"/>
</dbReference>
<dbReference type="EMBL" id="AF410309">
    <property type="protein sequence ID" value="AAK95295.1"/>
    <property type="molecule type" value="mRNA"/>
</dbReference>
<dbReference type="EMBL" id="AY091210">
    <property type="protein sequence ID" value="AAM14149.1"/>
    <property type="molecule type" value="mRNA"/>
</dbReference>
<dbReference type="EMBL" id="AY087607">
    <property type="protein sequence ID" value="AAM65148.1"/>
    <property type="molecule type" value="mRNA"/>
</dbReference>
<dbReference type="RefSeq" id="NP_566435.1">
    <property type="nucleotide sequence ID" value="NM_112110.4"/>
</dbReference>
<dbReference type="SMR" id="Q9LTW0"/>
<dbReference type="FunCoup" id="Q9LTW0">
    <property type="interactions" value="3433"/>
</dbReference>
<dbReference type="STRING" id="3702.Q9LTW0"/>
<dbReference type="TCDB" id="8.A.27.1.4">
    <property type="family name" value="the cdc50 p-type atpase lipid flippase subunit (cdc50) family"/>
</dbReference>
<dbReference type="GlyCosmos" id="Q9LTW0">
    <property type="glycosylation" value="3 sites, No reported glycans"/>
</dbReference>
<dbReference type="GlyGen" id="Q9LTW0">
    <property type="glycosylation" value="3 sites"/>
</dbReference>
<dbReference type="iPTMnet" id="Q9LTW0"/>
<dbReference type="PaxDb" id="3702-AT3G12740.1"/>
<dbReference type="ProteomicsDB" id="244896"/>
<dbReference type="EnsemblPlants" id="AT3G12740.1">
    <property type="protein sequence ID" value="AT3G12740.1"/>
    <property type="gene ID" value="AT3G12740"/>
</dbReference>
<dbReference type="GeneID" id="820456"/>
<dbReference type="Gramene" id="AT3G12740.1">
    <property type="protein sequence ID" value="AT3G12740.1"/>
    <property type="gene ID" value="AT3G12740"/>
</dbReference>
<dbReference type="KEGG" id="ath:AT3G12740"/>
<dbReference type="Araport" id="AT3G12740"/>
<dbReference type="TAIR" id="AT3G12740">
    <property type="gene designation" value="ALIS1"/>
</dbReference>
<dbReference type="eggNOG" id="KOG2952">
    <property type="taxonomic scope" value="Eukaryota"/>
</dbReference>
<dbReference type="HOGENOM" id="CLU_025025_1_1_1"/>
<dbReference type="InParanoid" id="Q9LTW0"/>
<dbReference type="OMA" id="YNVTDER"/>
<dbReference type="OrthoDB" id="340608at2759"/>
<dbReference type="PhylomeDB" id="Q9LTW0"/>
<dbReference type="PRO" id="PR:Q9LTW0"/>
<dbReference type="Proteomes" id="UP000006548">
    <property type="component" value="Chromosome 3"/>
</dbReference>
<dbReference type="ExpressionAtlas" id="Q9LTW0">
    <property type="expression patterns" value="baseline and differential"/>
</dbReference>
<dbReference type="GO" id="GO:0005829">
    <property type="term" value="C:cytosol"/>
    <property type="evidence" value="ECO:0007005"/>
    <property type="project" value="TAIR"/>
</dbReference>
<dbReference type="GO" id="GO:0005789">
    <property type="term" value="C:endoplasmic reticulum membrane"/>
    <property type="evidence" value="ECO:0007669"/>
    <property type="project" value="UniProtKB-SubCell"/>
</dbReference>
<dbReference type="GO" id="GO:0005794">
    <property type="term" value="C:Golgi apparatus"/>
    <property type="evidence" value="ECO:0000314"/>
    <property type="project" value="TAIR"/>
</dbReference>
<dbReference type="GO" id="GO:0000139">
    <property type="term" value="C:Golgi membrane"/>
    <property type="evidence" value="ECO:0007669"/>
    <property type="project" value="UniProtKB-SubCell"/>
</dbReference>
<dbReference type="GO" id="GO:0015914">
    <property type="term" value="P:phospholipid transport"/>
    <property type="evidence" value="ECO:0000314"/>
    <property type="project" value="TAIR"/>
</dbReference>
<dbReference type="InterPro" id="IPR005045">
    <property type="entry name" value="CDC50/LEM3_fam"/>
</dbReference>
<dbReference type="PANTHER" id="PTHR10926:SF65">
    <property type="entry name" value="ALA-INTERACTING SUBUNIT 1"/>
    <property type="match status" value="1"/>
</dbReference>
<dbReference type="PANTHER" id="PTHR10926">
    <property type="entry name" value="CELL CYCLE CONTROL PROTEIN 50"/>
    <property type="match status" value="1"/>
</dbReference>
<dbReference type="Pfam" id="PF03381">
    <property type="entry name" value="CDC50"/>
    <property type="match status" value="1"/>
</dbReference>
<dbReference type="PIRSF" id="PIRSF015840">
    <property type="entry name" value="DUF284_TM_euk"/>
    <property type="match status" value="1"/>
</dbReference>
<proteinExistence type="evidence at protein level"/>
<evidence type="ECO:0000255" key="1"/>
<evidence type="ECO:0000256" key="2">
    <source>
        <dbReference type="SAM" id="MobiDB-lite"/>
    </source>
</evidence>
<evidence type="ECO:0000269" key="3">
    <source>
    </source>
</evidence>
<evidence type="ECO:0000269" key="4">
    <source>
    </source>
</evidence>
<evidence type="ECO:0000305" key="5"/>
<evidence type="ECO:0007744" key="6">
    <source>
    </source>
</evidence>
<keyword id="KW-0007">Acetylation</keyword>
<keyword id="KW-0256">Endoplasmic reticulum</keyword>
<keyword id="KW-0325">Glycoprotein</keyword>
<keyword id="KW-0333">Golgi apparatus</keyword>
<keyword id="KW-0472">Membrane</keyword>
<keyword id="KW-1185">Reference proteome</keyword>
<keyword id="KW-0812">Transmembrane</keyword>
<keyword id="KW-1133">Transmembrane helix</keyword>
<name>ALIS1_ARATH</name>
<accession>Q9LTW0</accession>
<reference key="1">
    <citation type="journal article" date="2000" name="DNA Res.">
        <title>Structural analysis of Arabidopsis thaliana chromosome 3. I. Sequence features of the regions of 4,504,864 bp covered by sixty P1 and TAC clones.</title>
        <authorList>
            <person name="Sato S."/>
            <person name="Nakamura Y."/>
            <person name="Kaneko T."/>
            <person name="Katoh T."/>
            <person name="Asamizu E."/>
            <person name="Tabata S."/>
        </authorList>
    </citation>
    <scope>NUCLEOTIDE SEQUENCE [LARGE SCALE GENOMIC DNA]</scope>
    <source>
        <strain>cv. Columbia</strain>
    </source>
</reference>
<reference key="2">
    <citation type="journal article" date="2017" name="Plant J.">
        <title>Araport11: a complete reannotation of the Arabidopsis thaliana reference genome.</title>
        <authorList>
            <person name="Cheng C.Y."/>
            <person name="Krishnakumar V."/>
            <person name="Chan A.P."/>
            <person name="Thibaud-Nissen F."/>
            <person name="Schobel S."/>
            <person name="Town C.D."/>
        </authorList>
    </citation>
    <scope>GENOME REANNOTATION</scope>
    <source>
        <strain>cv. Columbia</strain>
    </source>
</reference>
<reference key="3">
    <citation type="journal article" date="2003" name="Science">
        <title>Empirical analysis of transcriptional activity in the Arabidopsis genome.</title>
        <authorList>
            <person name="Yamada K."/>
            <person name="Lim J."/>
            <person name="Dale J.M."/>
            <person name="Chen H."/>
            <person name="Shinn P."/>
            <person name="Palm C.J."/>
            <person name="Southwick A.M."/>
            <person name="Wu H.C."/>
            <person name="Kim C.J."/>
            <person name="Nguyen M."/>
            <person name="Pham P.K."/>
            <person name="Cheuk R.F."/>
            <person name="Karlin-Newmann G."/>
            <person name="Liu S.X."/>
            <person name="Lam B."/>
            <person name="Sakano H."/>
            <person name="Wu T."/>
            <person name="Yu G."/>
            <person name="Miranda M."/>
            <person name="Quach H.L."/>
            <person name="Tripp M."/>
            <person name="Chang C.H."/>
            <person name="Lee J.M."/>
            <person name="Toriumi M.J."/>
            <person name="Chan M.M."/>
            <person name="Tang C.C."/>
            <person name="Onodera C.S."/>
            <person name="Deng J.M."/>
            <person name="Akiyama K."/>
            <person name="Ansari Y."/>
            <person name="Arakawa T."/>
            <person name="Banh J."/>
            <person name="Banno F."/>
            <person name="Bowser L."/>
            <person name="Brooks S.Y."/>
            <person name="Carninci P."/>
            <person name="Chao Q."/>
            <person name="Choy N."/>
            <person name="Enju A."/>
            <person name="Goldsmith A.D."/>
            <person name="Gurjal M."/>
            <person name="Hansen N.F."/>
            <person name="Hayashizaki Y."/>
            <person name="Johnson-Hopson C."/>
            <person name="Hsuan V.W."/>
            <person name="Iida K."/>
            <person name="Karnes M."/>
            <person name="Khan S."/>
            <person name="Koesema E."/>
            <person name="Ishida J."/>
            <person name="Jiang P.X."/>
            <person name="Jones T."/>
            <person name="Kawai J."/>
            <person name="Kamiya A."/>
            <person name="Meyers C."/>
            <person name="Nakajima M."/>
            <person name="Narusaka M."/>
            <person name="Seki M."/>
            <person name="Sakurai T."/>
            <person name="Satou M."/>
            <person name="Tamse R."/>
            <person name="Vaysberg M."/>
            <person name="Wallender E.K."/>
            <person name="Wong C."/>
            <person name="Yamamura Y."/>
            <person name="Yuan S."/>
            <person name="Shinozaki K."/>
            <person name="Davis R.W."/>
            <person name="Theologis A."/>
            <person name="Ecker J.R."/>
        </authorList>
    </citation>
    <scope>NUCLEOTIDE SEQUENCE [LARGE SCALE MRNA]</scope>
    <source>
        <strain>cv. Columbia</strain>
    </source>
</reference>
<reference key="4">
    <citation type="submission" date="2002-03" db="EMBL/GenBank/DDBJ databases">
        <title>Full-length cDNA from Arabidopsis thaliana.</title>
        <authorList>
            <person name="Brover V.V."/>
            <person name="Troukhan M.E."/>
            <person name="Alexandrov N.A."/>
            <person name="Lu Y.-P."/>
            <person name="Flavell R.B."/>
            <person name="Feldmann K.A."/>
        </authorList>
    </citation>
    <scope>NUCLEOTIDE SEQUENCE [LARGE SCALE MRNA]</scope>
</reference>
<reference key="5">
    <citation type="journal article" date="2008" name="Plant Cell">
        <title>The Arabidopsis P4-ATPase ALA3 localizes to the Golgi and requires a beta-subunit to function in lipid translocation and secretory vesicle formation.</title>
        <authorList>
            <person name="Poulsen L.R."/>
            <person name="Lopez-Marques R.L."/>
            <person name="McDowell S.C."/>
            <person name="Okkeri J."/>
            <person name="Licht D."/>
            <person name="Schulz A."/>
            <person name="Pomorski T."/>
            <person name="Harper J.F."/>
            <person name="Palmgren M.G."/>
        </authorList>
    </citation>
    <scope>FUNCTION</scope>
    <scope>SUBCELLULAR LOCATION</scope>
    <scope>TISSUE SPECIFICITY</scope>
    <scope>INTERACTION WITH ALA3</scope>
</reference>
<reference key="6">
    <citation type="journal article" date="2010" name="Mol. Biol. Cell">
        <title>Intracellular targeting signals and lipid specificity determinants of the ALA/ALIS P4-ATPase complex reside in the catalytic ALA alpha-subunit.</title>
        <authorList>
            <person name="Lopez-Marques R.L."/>
            <person name="Poulsen L.R."/>
            <person name="Hanisch S."/>
            <person name="Meffert K."/>
            <person name="Buch-Pedersen M.J."/>
            <person name="Jakobsen M.K."/>
            <person name="Pomorski T.G."/>
            <person name="Palmgren M.G."/>
        </authorList>
    </citation>
    <scope>FUNCTION</scope>
    <scope>SUBCELLULAR LOCATION</scope>
    <scope>INTERACTION WITH ALA2 AND ALA3</scope>
</reference>
<reference key="7">
    <citation type="journal article" date="2012" name="Mol. Cell. Proteomics">
        <title>Comparative large-scale characterisation of plant vs. mammal proteins reveals similar and idiosyncratic N-alpha acetylation features.</title>
        <authorList>
            <person name="Bienvenut W.V."/>
            <person name="Sumpton D."/>
            <person name="Martinez A."/>
            <person name="Lilla S."/>
            <person name="Espagne C."/>
            <person name="Meinnel T."/>
            <person name="Giglione C."/>
        </authorList>
    </citation>
    <scope>ACETYLATION [LARGE SCALE ANALYSIS] AT SER-2</scope>
    <scope>CLEAVAGE OF INITIATOR METHIONINE [LARGE SCALE ANALYSIS]</scope>
    <scope>IDENTIFICATION BY MASS SPECTROMETRY [LARGE SCALE ANALYSIS]</scope>
</reference>
<organism>
    <name type="scientific">Arabidopsis thaliana</name>
    <name type="common">Mouse-ear cress</name>
    <dbReference type="NCBI Taxonomy" id="3702"/>
    <lineage>
        <taxon>Eukaryota</taxon>
        <taxon>Viridiplantae</taxon>
        <taxon>Streptophyta</taxon>
        <taxon>Embryophyta</taxon>
        <taxon>Tracheophyta</taxon>
        <taxon>Spermatophyta</taxon>
        <taxon>Magnoliopsida</taxon>
        <taxon>eudicotyledons</taxon>
        <taxon>Gunneridae</taxon>
        <taxon>Pentapetalae</taxon>
        <taxon>rosids</taxon>
        <taxon>malvids</taxon>
        <taxon>Brassicales</taxon>
        <taxon>Brassicaceae</taxon>
        <taxon>Camelineae</taxon>
        <taxon>Arabidopsis</taxon>
    </lineage>
</organism>
<gene>
    <name type="primary">ALIS1</name>
    <name type="ordered locus">At3g12740</name>
    <name type="ORF">MBK21.12</name>
</gene>